<gene>
    <name evidence="1" type="primary">fadA</name>
    <name type="ordered locus">Pput_3605</name>
</gene>
<evidence type="ECO:0000255" key="1">
    <source>
        <dbReference type="HAMAP-Rule" id="MF_01620"/>
    </source>
</evidence>
<feature type="chain" id="PRO_0000323550" description="3-ketoacyl-CoA thiolase">
    <location>
        <begin position="1"/>
        <end position="391"/>
    </location>
</feature>
<feature type="active site" description="Acyl-thioester intermediate" evidence="1">
    <location>
        <position position="95"/>
    </location>
</feature>
<feature type="active site" description="Proton acceptor" evidence="1">
    <location>
        <position position="347"/>
    </location>
</feature>
<feature type="active site" description="Proton acceptor" evidence="1">
    <location>
        <position position="377"/>
    </location>
</feature>
<reference key="1">
    <citation type="submission" date="2007-05" db="EMBL/GenBank/DDBJ databases">
        <title>Complete sequence of Pseudomonas putida F1.</title>
        <authorList>
            <consortium name="US DOE Joint Genome Institute"/>
            <person name="Copeland A."/>
            <person name="Lucas S."/>
            <person name="Lapidus A."/>
            <person name="Barry K."/>
            <person name="Detter J.C."/>
            <person name="Glavina del Rio T."/>
            <person name="Hammon N."/>
            <person name="Israni S."/>
            <person name="Dalin E."/>
            <person name="Tice H."/>
            <person name="Pitluck S."/>
            <person name="Chain P."/>
            <person name="Malfatti S."/>
            <person name="Shin M."/>
            <person name="Vergez L."/>
            <person name="Schmutz J."/>
            <person name="Larimer F."/>
            <person name="Land M."/>
            <person name="Hauser L."/>
            <person name="Kyrpides N."/>
            <person name="Lykidis A."/>
            <person name="Parales R."/>
            <person name="Richardson P."/>
        </authorList>
    </citation>
    <scope>NUCLEOTIDE SEQUENCE [LARGE SCALE GENOMIC DNA]</scope>
    <source>
        <strain>ATCC 700007 / DSM 6899 / JCM 31910 / BCRC 17059 / LMG 24140 / F1</strain>
    </source>
</reference>
<protein>
    <recommendedName>
        <fullName evidence="1">3-ketoacyl-CoA thiolase</fullName>
        <ecNumber evidence="1">2.3.1.16</ecNumber>
    </recommendedName>
    <alternativeName>
        <fullName evidence="1">Acetyl-CoA acyltransferase</fullName>
    </alternativeName>
    <alternativeName>
        <fullName evidence="1">Beta-ketothiolase</fullName>
    </alternativeName>
    <alternativeName>
        <fullName evidence="1">Fatty acid oxidation complex subunit beta</fullName>
    </alternativeName>
</protein>
<keyword id="KW-0012">Acyltransferase</keyword>
<keyword id="KW-0963">Cytoplasm</keyword>
<keyword id="KW-0276">Fatty acid metabolism</keyword>
<keyword id="KW-0442">Lipid degradation</keyword>
<keyword id="KW-0443">Lipid metabolism</keyword>
<keyword id="KW-0808">Transferase</keyword>
<sequence length="391" mass="41587">MSLNPRDVVIVDFGRTPMGRSKGGMHRNTRAEDMSAHLISKLLERNGKVDPKEVEDVIWGCVNQTLEQGWNIARMASLMTQIPHTSAAQTVSRLCGSSMSALHTAAQAIMTGNGDVFVVGGVEHMGHVSMMHGVDPNPHLSLHAAKASGMMGLTAEMLGKMHGITREQQDLFGLRSHQLAHKATVEGKFKDEIIPMQGYDENGFLKVFDFDETIRPETTLEGLASLKPAFNPKGGTVTAGTSSQITDGASCMIVMSGQRAMDLGIQPLAVIRSMAVAGVDPAIMGYGPVPSTQKALKRAGLTMADIDFIELNEAFAAQALPVLKDLKVLDKMDEKVNLHGGAIALGHPFGCSGARISGTLLNVMKQNGGTLGVATMCVGLGQGITTVFERV</sequence>
<organism>
    <name type="scientific">Pseudomonas putida (strain ATCC 700007 / DSM 6899 / JCM 31910 / BCRC 17059 / LMG 24140 / F1)</name>
    <dbReference type="NCBI Taxonomy" id="351746"/>
    <lineage>
        <taxon>Bacteria</taxon>
        <taxon>Pseudomonadati</taxon>
        <taxon>Pseudomonadota</taxon>
        <taxon>Gammaproteobacteria</taxon>
        <taxon>Pseudomonadales</taxon>
        <taxon>Pseudomonadaceae</taxon>
        <taxon>Pseudomonas</taxon>
    </lineage>
</organism>
<name>FADA_PSEP1</name>
<accession>A5W6G9</accession>
<proteinExistence type="inferred from homology"/>
<comment type="function">
    <text evidence="1">Catalyzes the final step of fatty acid oxidation in which acetyl-CoA is released and the CoA ester of a fatty acid two carbons shorter is formed.</text>
</comment>
<comment type="catalytic activity">
    <reaction evidence="1">
        <text>an acyl-CoA + acetyl-CoA = a 3-oxoacyl-CoA + CoA</text>
        <dbReference type="Rhea" id="RHEA:21564"/>
        <dbReference type="ChEBI" id="CHEBI:57287"/>
        <dbReference type="ChEBI" id="CHEBI:57288"/>
        <dbReference type="ChEBI" id="CHEBI:58342"/>
        <dbReference type="ChEBI" id="CHEBI:90726"/>
        <dbReference type="EC" id="2.3.1.16"/>
    </reaction>
</comment>
<comment type="pathway">
    <text evidence="1">Lipid metabolism; fatty acid beta-oxidation.</text>
</comment>
<comment type="subunit">
    <text evidence="1">Heterotetramer of two alpha chains (FadB) and two beta chains (FadA).</text>
</comment>
<comment type="subcellular location">
    <subcellularLocation>
        <location evidence="1">Cytoplasm</location>
    </subcellularLocation>
</comment>
<comment type="similarity">
    <text evidence="1">Belongs to the thiolase-like superfamily. Thiolase family.</text>
</comment>
<dbReference type="EC" id="2.3.1.16" evidence="1"/>
<dbReference type="EMBL" id="CP000712">
    <property type="protein sequence ID" value="ABQ79729.1"/>
    <property type="molecule type" value="Genomic_DNA"/>
</dbReference>
<dbReference type="SMR" id="A5W6G9"/>
<dbReference type="KEGG" id="ppf:Pput_3605"/>
<dbReference type="eggNOG" id="COG0183">
    <property type="taxonomic scope" value="Bacteria"/>
</dbReference>
<dbReference type="HOGENOM" id="CLU_031026_2_3_6"/>
<dbReference type="UniPathway" id="UPA00659"/>
<dbReference type="GO" id="GO:0005737">
    <property type="term" value="C:cytoplasm"/>
    <property type="evidence" value="ECO:0007669"/>
    <property type="project" value="UniProtKB-SubCell"/>
</dbReference>
<dbReference type="GO" id="GO:0003988">
    <property type="term" value="F:acetyl-CoA C-acyltransferase activity"/>
    <property type="evidence" value="ECO:0007669"/>
    <property type="project" value="UniProtKB-UniRule"/>
</dbReference>
<dbReference type="GO" id="GO:0006635">
    <property type="term" value="P:fatty acid beta-oxidation"/>
    <property type="evidence" value="ECO:0007669"/>
    <property type="project" value="UniProtKB-UniRule"/>
</dbReference>
<dbReference type="GO" id="GO:0010124">
    <property type="term" value="P:phenylacetate catabolic process"/>
    <property type="evidence" value="ECO:0007669"/>
    <property type="project" value="TreeGrafter"/>
</dbReference>
<dbReference type="CDD" id="cd00751">
    <property type="entry name" value="thiolase"/>
    <property type="match status" value="1"/>
</dbReference>
<dbReference type="FunFam" id="3.40.47.10:FF:000010">
    <property type="entry name" value="Acetyl-CoA acetyltransferase (Thiolase)"/>
    <property type="match status" value="1"/>
</dbReference>
<dbReference type="Gene3D" id="3.40.47.10">
    <property type="match status" value="2"/>
</dbReference>
<dbReference type="HAMAP" id="MF_01620">
    <property type="entry name" value="FadA"/>
    <property type="match status" value="1"/>
</dbReference>
<dbReference type="InterPro" id="IPR012805">
    <property type="entry name" value="FadA"/>
</dbReference>
<dbReference type="InterPro" id="IPR002155">
    <property type="entry name" value="Thiolase"/>
</dbReference>
<dbReference type="InterPro" id="IPR016039">
    <property type="entry name" value="Thiolase-like"/>
</dbReference>
<dbReference type="InterPro" id="IPR050215">
    <property type="entry name" value="Thiolase-like_sf_Thiolase"/>
</dbReference>
<dbReference type="InterPro" id="IPR020615">
    <property type="entry name" value="Thiolase_acyl_enz_int_AS"/>
</dbReference>
<dbReference type="InterPro" id="IPR020617">
    <property type="entry name" value="Thiolase_C"/>
</dbReference>
<dbReference type="InterPro" id="IPR020613">
    <property type="entry name" value="Thiolase_CS"/>
</dbReference>
<dbReference type="InterPro" id="IPR020616">
    <property type="entry name" value="Thiolase_N"/>
</dbReference>
<dbReference type="NCBIfam" id="TIGR01930">
    <property type="entry name" value="AcCoA-C-Actrans"/>
    <property type="match status" value="1"/>
</dbReference>
<dbReference type="NCBIfam" id="TIGR02445">
    <property type="entry name" value="fadA"/>
    <property type="match status" value="1"/>
</dbReference>
<dbReference type="NCBIfam" id="NF006510">
    <property type="entry name" value="PRK08947.1"/>
    <property type="match status" value="1"/>
</dbReference>
<dbReference type="PANTHER" id="PTHR43853:SF11">
    <property type="entry name" value="3-KETOACYL-COA THIOLASE FADA"/>
    <property type="match status" value="1"/>
</dbReference>
<dbReference type="PANTHER" id="PTHR43853">
    <property type="entry name" value="3-KETOACYL-COA THIOLASE, PEROXISOMAL"/>
    <property type="match status" value="1"/>
</dbReference>
<dbReference type="Pfam" id="PF02803">
    <property type="entry name" value="Thiolase_C"/>
    <property type="match status" value="1"/>
</dbReference>
<dbReference type="Pfam" id="PF00108">
    <property type="entry name" value="Thiolase_N"/>
    <property type="match status" value="1"/>
</dbReference>
<dbReference type="PIRSF" id="PIRSF000429">
    <property type="entry name" value="Ac-CoA_Ac_transf"/>
    <property type="match status" value="1"/>
</dbReference>
<dbReference type="SUPFAM" id="SSF53901">
    <property type="entry name" value="Thiolase-like"/>
    <property type="match status" value="2"/>
</dbReference>
<dbReference type="PROSITE" id="PS00098">
    <property type="entry name" value="THIOLASE_1"/>
    <property type="match status" value="1"/>
</dbReference>
<dbReference type="PROSITE" id="PS00737">
    <property type="entry name" value="THIOLASE_2"/>
    <property type="match status" value="1"/>
</dbReference>